<gene>
    <name type="ORF">GK12179</name>
</gene>
<organism>
    <name type="scientific">Drosophila willistoni</name>
    <name type="common">Fruit fly</name>
    <dbReference type="NCBI Taxonomy" id="7260"/>
    <lineage>
        <taxon>Eukaryota</taxon>
        <taxon>Metazoa</taxon>
        <taxon>Ecdysozoa</taxon>
        <taxon>Arthropoda</taxon>
        <taxon>Hexapoda</taxon>
        <taxon>Insecta</taxon>
        <taxon>Pterygota</taxon>
        <taxon>Neoptera</taxon>
        <taxon>Endopterygota</taxon>
        <taxon>Diptera</taxon>
        <taxon>Brachycera</taxon>
        <taxon>Muscomorpha</taxon>
        <taxon>Ephydroidea</taxon>
        <taxon>Drosophilidae</taxon>
        <taxon>Drosophila</taxon>
        <taxon>Sophophora</taxon>
    </lineage>
</organism>
<proteinExistence type="inferred from homology"/>
<protein>
    <recommendedName>
        <fullName>WD repeat-containing protein 55 homolog</fullName>
    </recommendedName>
</protein>
<evidence type="ECO:0000256" key="1">
    <source>
        <dbReference type="SAM" id="MobiDB-lite"/>
    </source>
</evidence>
<evidence type="ECO:0000305" key="2"/>
<feature type="chain" id="PRO_0000373967" description="WD repeat-containing protein 55 homolog">
    <location>
        <begin position="1"/>
        <end position="504"/>
    </location>
</feature>
<feature type="repeat" description="WD 1">
    <location>
        <begin position="158"/>
        <end position="197"/>
    </location>
</feature>
<feature type="repeat" description="WD 2">
    <location>
        <begin position="202"/>
        <end position="241"/>
    </location>
</feature>
<feature type="repeat" description="WD 3">
    <location>
        <begin position="245"/>
        <end position="283"/>
    </location>
</feature>
<feature type="repeat" description="WD 4">
    <location>
        <begin position="286"/>
        <end position="325"/>
    </location>
</feature>
<feature type="repeat" description="WD 5">
    <location>
        <begin position="328"/>
        <end position="367"/>
    </location>
</feature>
<feature type="repeat" description="WD 6">
    <location>
        <begin position="412"/>
        <end position="451"/>
    </location>
</feature>
<feature type="region of interest" description="Disordered" evidence="1">
    <location>
        <begin position="32"/>
        <end position="135"/>
    </location>
</feature>
<feature type="region of interest" description="Disordered" evidence="1">
    <location>
        <begin position="484"/>
        <end position="504"/>
    </location>
</feature>
<feature type="compositionally biased region" description="Acidic residues" evidence="1">
    <location>
        <begin position="32"/>
        <end position="49"/>
    </location>
</feature>
<feature type="compositionally biased region" description="Polar residues" evidence="1">
    <location>
        <begin position="66"/>
        <end position="76"/>
    </location>
</feature>
<feature type="compositionally biased region" description="Acidic residues" evidence="1">
    <location>
        <begin position="77"/>
        <end position="95"/>
    </location>
</feature>
<feature type="compositionally biased region" description="Polar residues" evidence="1">
    <location>
        <begin position="114"/>
        <end position="124"/>
    </location>
</feature>
<dbReference type="EMBL" id="CH964232">
    <property type="protein sequence ID" value="EDW81631.1"/>
    <property type="molecule type" value="Genomic_DNA"/>
</dbReference>
<dbReference type="SMR" id="B4N984"/>
<dbReference type="STRING" id="7260.B4N984"/>
<dbReference type="EnsemblMetazoa" id="FBtr0242830">
    <property type="protein sequence ID" value="FBpp0241322"/>
    <property type="gene ID" value="FBgn0214190"/>
</dbReference>
<dbReference type="EnsemblMetazoa" id="XM_002070609.4">
    <property type="protein sequence ID" value="XP_002070645.1"/>
    <property type="gene ID" value="LOC6647877"/>
</dbReference>
<dbReference type="GeneID" id="6647877"/>
<dbReference type="KEGG" id="dwi:6647877"/>
<dbReference type="eggNOG" id="KOG2444">
    <property type="taxonomic scope" value="Eukaryota"/>
</dbReference>
<dbReference type="HOGENOM" id="CLU_035848_1_0_1"/>
<dbReference type="OMA" id="QAIHPTE"/>
<dbReference type="OrthoDB" id="2288928at2759"/>
<dbReference type="PhylomeDB" id="B4N984"/>
<dbReference type="Proteomes" id="UP000007798">
    <property type="component" value="Unassembled WGS sequence"/>
</dbReference>
<dbReference type="Gene3D" id="2.130.10.10">
    <property type="entry name" value="YVTN repeat-like/Quinoprotein amine dehydrogenase"/>
    <property type="match status" value="2"/>
</dbReference>
<dbReference type="InterPro" id="IPR015943">
    <property type="entry name" value="WD40/YVTN_repeat-like_dom_sf"/>
</dbReference>
<dbReference type="InterPro" id="IPR019775">
    <property type="entry name" value="WD40_repeat_CS"/>
</dbReference>
<dbReference type="InterPro" id="IPR036322">
    <property type="entry name" value="WD40_repeat_dom_sf"/>
</dbReference>
<dbReference type="InterPro" id="IPR001680">
    <property type="entry name" value="WD40_rpt"/>
</dbReference>
<dbReference type="InterPro" id="IPR050505">
    <property type="entry name" value="WDR55_POC1"/>
</dbReference>
<dbReference type="PANTHER" id="PTHR44019">
    <property type="entry name" value="WD REPEAT-CONTAINING PROTEIN 55"/>
    <property type="match status" value="1"/>
</dbReference>
<dbReference type="PANTHER" id="PTHR44019:SF20">
    <property type="entry name" value="WD REPEAT-CONTAINING PROTEIN 55"/>
    <property type="match status" value="1"/>
</dbReference>
<dbReference type="Pfam" id="PF24796">
    <property type="entry name" value="WDR55"/>
    <property type="match status" value="1"/>
</dbReference>
<dbReference type="SMART" id="SM00320">
    <property type="entry name" value="WD40"/>
    <property type="match status" value="5"/>
</dbReference>
<dbReference type="SUPFAM" id="SSF50978">
    <property type="entry name" value="WD40 repeat-like"/>
    <property type="match status" value="1"/>
</dbReference>
<dbReference type="PROSITE" id="PS00678">
    <property type="entry name" value="WD_REPEATS_1"/>
    <property type="match status" value="1"/>
</dbReference>
<dbReference type="PROSITE" id="PS50082">
    <property type="entry name" value="WD_REPEATS_2"/>
    <property type="match status" value="3"/>
</dbReference>
<dbReference type="PROSITE" id="PS50294">
    <property type="entry name" value="WD_REPEATS_REGION"/>
    <property type="match status" value="1"/>
</dbReference>
<reference key="1">
    <citation type="journal article" date="2007" name="Nature">
        <title>Evolution of genes and genomes on the Drosophila phylogeny.</title>
        <authorList>
            <consortium name="Drosophila 12 genomes consortium"/>
        </authorList>
    </citation>
    <scope>NUCLEOTIDE SEQUENCE [LARGE SCALE GENOMIC DNA]</scope>
    <source>
        <strain>Tucson 14030-0811.24</strain>
    </source>
</reference>
<sequence length="504" mass="56391">MHTHELFKTPLEEDEVEVSEDDVVGFIAEIEQEVVNESDSEIGEYDLGDDIGAPEPFERAAANAEDSISSDGSFNPNDEDSDTDSDDSMLDEPDEAAVGGASKAKRRKDDDGPSGSSNRNQDSDGNAFDMDEDDETDETVRAIIAAIKKPRSAPPEIKLEDFITDICFHPERHIIALATIIGDVHLYEYSNEENKLLKTIEVHAKACRDVEFTEDGRSLITCSKDKSVMITDMETEKLKKLYETAHDDAINKLLVLDERLFASGDDSGTVKLWDFRTKDSIFELKEIEDQVTQMITNDQKKLLLATSADGYLTTFNIGARKLYVQSEPYEEELNCMGIYRGNSKLVVGTSKGRLYSYNWGYFGYHCDMYPGIKSPISLMIPITERIACVAGEDGNIRACHITPYRNLGVVGQHNMPIESMDINTNGELLASSSHNNDVRFWNVKYFEDFGDIKYNEKHNAYKDKRHNLPSSKCTNASDFFADLAKEDNNDNENDDATAGPSNTT</sequence>
<keyword id="KW-1185">Reference proteome</keyword>
<keyword id="KW-0677">Repeat</keyword>
<keyword id="KW-0853">WD repeat</keyword>
<accession>B4N984</accession>
<comment type="similarity">
    <text evidence="2">Belongs to the WD repeat WDR55 family.</text>
</comment>
<name>WDR55_DROWI</name>